<name>TRPG_HALSA</name>
<accession>Q9HPG6</accession>
<reference key="1">
    <citation type="journal article" date="2000" name="Proc. Natl. Acad. Sci. U.S.A.">
        <title>Genome sequence of Halobacterium species NRC-1.</title>
        <authorList>
            <person name="Ng W.V."/>
            <person name="Kennedy S.P."/>
            <person name="Mahairas G.G."/>
            <person name="Berquist B."/>
            <person name="Pan M."/>
            <person name="Shukla H.D."/>
            <person name="Lasky S.R."/>
            <person name="Baliga N.S."/>
            <person name="Thorsson V."/>
            <person name="Sbrogna J."/>
            <person name="Swartzell S."/>
            <person name="Weir D."/>
            <person name="Hall J."/>
            <person name="Dahl T.A."/>
            <person name="Welti R."/>
            <person name="Goo Y.A."/>
            <person name="Leithauser B."/>
            <person name="Keller K."/>
            <person name="Cruz R."/>
            <person name="Danson M.J."/>
            <person name="Hough D.W."/>
            <person name="Maddocks D.G."/>
            <person name="Jablonski P.E."/>
            <person name="Krebs M.P."/>
            <person name="Angevine C.M."/>
            <person name="Dale H."/>
            <person name="Isenbarger T.A."/>
            <person name="Peck R.F."/>
            <person name="Pohlschroder M."/>
            <person name="Spudich J.L."/>
            <person name="Jung K.-H."/>
            <person name="Alam M."/>
            <person name="Freitas T."/>
            <person name="Hou S."/>
            <person name="Daniels C.J."/>
            <person name="Dennis P.P."/>
            <person name="Omer A.D."/>
            <person name="Ebhardt H."/>
            <person name="Lowe T.M."/>
            <person name="Liang P."/>
            <person name="Riley M."/>
            <person name="Hood L."/>
            <person name="DasSarma S."/>
        </authorList>
    </citation>
    <scope>NUCLEOTIDE SEQUENCE [LARGE SCALE GENOMIC DNA]</scope>
    <source>
        <strain>ATCC 700922 / JCM 11081 / NRC-1</strain>
    </source>
</reference>
<protein>
    <recommendedName>
        <fullName>Anthranilate synthase component 2</fullName>
        <shortName>AS</shortName>
        <shortName>ASII</shortName>
        <ecNumber>4.1.3.27</ecNumber>
    </recommendedName>
    <alternativeName>
        <fullName>Anthranilate synthase, GATase component</fullName>
    </alternativeName>
    <alternativeName>
        <fullName>Anthranilate synthase, glutamine amidotransferase component</fullName>
    </alternativeName>
</protein>
<organism>
    <name type="scientific">Halobacterium salinarum (strain ATCC 700922 / JCM 11081 / NRC-1)</name>
    <name type="common">Halobacterium halobium</name>
    <dbReference type="NCBI Taxonomy" id="64091"/>
    <lineage>
        <taxon>Archaea</taxon>
        <taxon>Methanobacteriati</taxon>
        <taxon>Methanobacteriota</taxon>
        <taxon>Stenosarchaea group</taxon>
        <taxon>Halobacteria</taxon>
        <taxon>Halobacteriales</taxon>
        <taxon>Halobacteriaceae</taxon>
        <taxon>Halobacterium</taxon>
        <taxon>Halobacterium salinarum NRC-34001</taxon>
    </lineage>
</organism>
<feature type="chain" id="PRO_0000056882" description="Anthranilate synthase component 2">
    <location>
        <begin position="1"/>
        <end position="198"/>
    </location>
</feature>
<feature type="domain" description="Glutamine amidotransferase type-1" evidence="3">
    <location>
        <begin position="2"/>
        <end position="198"/>
    </location>
</feature>
<feature type="active site" description="Nucleophile; for GATase activity" evidence="3">
    <location>
        <position position="87"/>
    </location>
</feature>
<feature type="active site" description="For GATase activity" evidence="3">
    <location>
        <position position="175"/>
    </location>
</feature>
<feature type="active site" description="For GATase activity" evidence="3">
    <location>
        <position position="177"/>
    </location>
</feature>
<feature type="binding site" evidence="2">
    <location>
        <begin position="57"/>
        <end position="59"/>
    </location>
    <ligand>
        <name>L-glutamine</name>
        <dbReference type="ChEBI" id="CHEBI:58359"/>
    </ligand>
</feature>
<feature type="binding site" evidence="2">
    <location>
        <begin position="137"/>
        <end position="138"/>
    </location>
    <ligand>
        <name>L-glutamine</name>
        <dbReference type="ChEBI" id="CHEBI:58359"/>
    </ligand>
</feature>
<proteinExistence type="inferred from homology"/>
<comment type="function">
    <text evidence="1">Part of a heterotetrameric complex that catalyzes the two-step biosynthesis of anthranilate, an intermediate in the biosynthesis of L-tryptophan. In the first step, the glutamine-binding beta subunit (TrpG) of anthranilate synthase (AS) provides the glutamine amidotransferase activity which generates ammonia as a substrate that, along with chorismate, is used in the second step, catalyzed by the large alpha subunit of AS (TrpE) to produce anthranilate. In the absence of TrpG, TrpE can synthesize anthranilate directly from chorismate and high concentrations of ammonia (By similarity).</text>
</comment>
<comment type="catalytic activity">
    <reaction>
        <text>chorismate + L-glutamine = anthranilate + pyruvate + L-glutamate + H(+)</text>
        <dbReference type="Rhea" id="RHEA:21732"/>
        <dbReference type="ChEBI" id="CHEBI:15361"/>
        <dbReference type="ChEBI" id="CHEBI:15378"/>
        <dbReference type="ChEBI" id="CHEBI:16567"/>
        <dbReference type="ChEBI" id="CHEBI:29748"/>
        <dbReference type="ChEBI" id="CHEBI:29985"/>
        <dbReference type="ChEBI" id="CHEBI:58359"/>
        <dbReference type="EC" id="4.1.3.27"/>
    </reaction>
</comment>
<comment type="pathway">
    <text>Amino-acid biosynthesis; L-tryptophan biosynthesis; L-tryptophan from chorismate: step 1/5.</text>
</comment>
<comment type="subunit">
    <text evidence="1">Heterotetramer consisting of two non-identical subunits: a beta subunit (TrpG) and a large alpha subunit (TrpE).</text>
</comment>
<evidence type="ECO:0000250" key="1"/>
<evidence type="ECO:0000250" key="2">
    <source>
        <dbReference type="UniProtKB" id="P00900"/>
    </source>
</evidence>
<evidence type="ECO:0000255" key="3">
    <source>
        <dbReference type="PROSITE-ProRule" id="PRU00605"/>
    </source>
</evidence>
<keyword id="KW-0028">Amino-acid biosynthesis</keyword>
<keyword id="KW-0057">Aromatic amino acid biosynthesis</keyword>
<keyword id="KW-0315">Glutamine amidotransferase</keyword>
<keyword id="KW-0456">Lyase</keyword>
<keyword id="KW-1185">Reference proteome</keyword>
<keyword id="KW-0822">Tryptophan biosynthesis</keyword>
<sequence>MNVVVVDNYDSFTYNLVEYLSAQPRDDHAPDVTVLKNTASLAAVRAADPDAVVISPGPGHPDTPRDVGVTTDVLRAVSPRVPTLGVCLGMEAAVHEYGGTVGRAAEPMHGKTTPVSHDETGIFADIQQDFPAARYHSLVCTSIPSCFAVTATTRDGSLPMAIRHRDHPLACVQFHPESVLTGVGHDVIGNFLDAAAAH</sequence>
<dbReference type="EC" id="4.1.3.27"/>
<dbReference type="EMBL" id="AE004437">
    <property type="protein sequence ID" value="AAG19901.1"/>
    <property type="molecule type" value="Genomic_DNA"/>
</dbReference>
<dbReference type="PIR" id="A84317">
    <property type="entry name" value="A84317"/>
</dbReference>
<dbReference type="RefSeq" id="WP_010903199.1">
    <property type="nucleotide sequence ID" value="NC_002607.1"/>
</dbReference>
<dbReference type="SMR" id="Q9HPG6"/>
<dbReference type="FunCoup" id="Q9HPG6">
    <property type="interactions" value="63"/>
</dbReference>
<dbReference type="STRING" id="64091.VNG_1646G"/>
<dbReference type="MEROPS" id="C26.959"/>
<dbReference type="PaxDb" id="64091-VNG_1646G"/>
<dbReference type="GeneID" id="68694315"/>
<dbReference type="KEGG" id="hal:VNG_1646G"/>
<dbReference type="PATRIC" id="fig|64091.14.peg.1254"/>
<dbReference type="HOGENOM" id="CLU_014340_1_2_2"/>
<dbReference type="InParanoid" id="Q9HPG6"/>
<dbReference type="OrthoDB" id="3321at2157"/>
<dbReference type="PhylomeDB" id="Q9HPG6"/>
<dbReference type="UniPathway" id="UPA00035">
    <property type="reaction ID" value="UER00040"/>
</dbReference>
<dbReference type="Proteomes" id="UP000000554">
    <property type="component" value="Chromosome"/>
</dbReference>
<dbReference type="GO" id="GO:0004049">
    <property type="term" value="F:anthranilate synthase activity"/>
    <property type="evidence" value="ECO:0007669"/>
    <property type="project" value="UniProtKB-EC"/>
</dbReference>
<dbReference type="GO" id="GO:0000162">
    <property type="term" value="P:L-tryptophan biosynthetic process"/>
    <property type="evidence" value="ECO:0000318"/>
    <property type="project" value="GO_Central"/>
</dbReference>
<dbReference type="CDD" id="cd01743">
    <property type="entry name" value="GATase1_Anthranilate_Synthase"/>
    <property type="match status" value="1"/>
</dbReference>
<dbReference type="FunFam" id="3.40.50.880:FF:000003">
    <property type="entry name" value="Anthranilate synthase component II"/>
    <property type="match status" value="1"/>
</dbReference>
<dbReference type="Gene3D" id="3.40.50.880">
    <property type="match status" value="1"/>
</dbReference>
<dbReference type="InterPro" id="IPR050472">
    <property type="entry name" value="Anth_synth/Amidotransfase"/>
</dbReference>
<dbReference type="InterPro" id="IPR053448">
    <property type="entry name" value="AS_beta_subunit"/>
</dbReference>
<dbReference type="InterPro" id="IPR029062">
    <property type="entry name" value="Class_I_gatase-like"/>
</dbReference>
<dbReference type="InterPro" id="IPR017926">
    <property type="entry name" value="GATASE"/>
</dbReference>
<dbReference type="InterPro" id="IPR006221">
    <property type="entry name" value="TrpG/PapA_dom"/>
</dbReference>
<dbReference type="NCBIfam" id="NF041322">
    <property type="entry name" value="Anth_synII_Halo"/>
    <property type="match status" value="1"/>
</dbReference>
<dbReference type="NCBIfam" id="TIGR00566">
    <property type="entry name" value="trpG_papA"/>
    <property type="match status" value="1"/>
</dbReference>
<dbReference type="PANTHER" id="PTHR43418:SF4">
    <property type="entry name" value="MULTIFUNCTIONAL TRYPTOPHAN BIOSYNTHESIS PROTEIN"/>
    <property type="match status" value="1"/>
</dbReference>
<dbReference type="PANTHER" id="PTHR43418">
    <property type="entry name" value="MULTIFUNCTIONAL TRYPTOPHAN BIOSYNTHESIS PROTEIN-RELATED"/>
    <property type="match status" value="1"/>
</dbReference>
<dbReference type="Pfam" id="PF00117">
    <property type="entry name" value="GATase"/>
    <property type="match status" value="1"/>
</dbReference>
<dbReference type="PRINTS" id="PR00097">
    <property type="entry name" value="ANTSNTHASEII"/>
</dbReference>
<dbReference type="PRINTS" id="PR00096">
    <property type="entry name" value="GATASE"/>
</dbReference>
<dbReference type="SUPFAM" id="SSF52317">
    <property type="entry name" value="Class I glutamine amidotransferase-like"/>
    <property type="match status" value="1"/>
</dbReference>
<dbReference type="PROSITE" id="PS51273">
    <property type="entry name" value="GATASE_TYPE_1"/>
    <property type="match status" value="1"/>
</dbReference>
<gene>
    <name type="primary">trpG</name>
    <name type="ordered locus">VNG_1646G</name>
</gene>